<organism>
    <name type="scientific">Trichormus variabilis (strain ATCC 29413 / PCC 7937)</name>
    <name type="common">Anabaena variabilis</name>
    <dbReference type="NCBI Taxonomy" id="240292"/>
    <lineage>
        <taxon>Bacteria</taxon>
        <taxon>Bacillati</taxon>
        <taxon>Cyanobacteriota</taxon>
        <taxon>Cyanophyceae</taxon>
        <taxon>Nostocales</taxon>
        <taxon>Nostocaceae</taxon>
        <taxon>Trichormus</taxon>
    </lineage>
</organism>
<dbReference type="EC" id="5.1.1.3" evidence="1"/>
<dbReference type="EMBL" id="CP000117">
    <property type="protein sequence ID" value="ABA21090.1"/>
    <property type="molecule type" value="Genomic_DNA"/>
</dbReference>
<dbReference type="SMR" id="Q3MD46"/>
<dbReference type="STRING" id="240292.Ava_1467"/>
<dbReference type="KEGG" id="ava:Ava_1467"/>
<dbReference type="eggNOG" id="COG0796">
    <property type="taxonomic scope" value="Bacteria"/>
</dbReference>
<dbReference type="HOGENOM" id="CLU_052344_0_2_3"/>
<dbReference type="UniPathway" id="UPA00219"/>
<dbReference type="Proteomes" id="UP000002533">
    <property type="component" value="Chromosome"/>
</dbReference>
<dbReference type="GO" id="GO:0008881">
    <property type="term" value="F:glutamate racemase activity"/>
    <property type="evidence" value="ECO:0007669"/>
    <property type="project" value="UniProtKB-UniRule"/>
</dbReference>
<dbReference type="GO" id="GO:0071555">
    <property type="term" value="P:cell wall organization"/>
    <property type="evidence" value="ECO:0007669"/>
    <property type="project" value="UniProtKB-KW"/>
</dbReference>
<dbReference type="GO" id="GO:0009252">
    <property type="term" value="P:peptidoglycan biosynthetic process"/>
    <property type="evidence" value="ECO:0007669"/>
    <property type="project" value="UniProtKB-UniRule"/>
</dbReference>
<dbReference type="GO" id="GO:0008360">
    <property type="term" value="P:regulation of cell shape"/>
    <property type="evidence" value="ECO:0007669"/>
    <property type="project" value="UniProtKB-KW"/>
</dbReference>
<dbReference type="FunFam" id="3.40.50.1860:FF:000002">
    <property type="entry name" value="Glutamate racemase"/>
    <property type="match status" value="1"/>
</dbReference>
<dbReference type="Gene3D" id="3.40.50.1860">
    <property type="match status" value="2"/>
</dbReference>
<dbReference type="HAMAP" id="MF_00258">
    <property type="entry name" value="Glu_racemase"/>
    <property type="match status" value="1"/>
</dbReference>
<dbReference type="InterPro" id="IPR015942">
    <property type="entry name" value="Asp/Glu/hydantoin_racemase"/>
</dbReference>
<dbReference type="InterPro" id="IPR001920">
    <property type="entry name" value="Asp/Glu_race"/>
</dbReference>
<dbReference type="InterPro" id="IPR018187">
    <property type="entry name" value="Asp/Glu_racemase_AS_1"/>
</dbReference>
<dbReference type="InterPro" id="IPR033134">
    <property type="entry name" value="Asp/Glu_racemase_AS_2"/>
</dbReference>
<dbReference type="InterPro" id="IPR004391">
    <property type="entry name" value="Glu_race"/>
</dbReference>
<dbReference type="NCBIfam" id="TIGR00067">
    <property type="entry name" value="glut_race"/>
    <property type="match status" value="1"/>
</dbReference>
<dbReference type="PANTHER" id="PTHR21198">
    <property type="entry name" value="GLUTAMATE RACEMASE"/>
    <property type="match status" value="1"/>
</dbReference>
<dbReference type="PANTHER" id="PTHR21198:SF2">
    <property type="entry name" value="GLUTAMATE RACEMASE"/>
    <property type="match status" value="1"/>
</dbReference>
<dbReference type="Pfam" id="PF01177">
    <property type="entry name" value="Asp_Glu_race"/>
    <property type="match status" value="1"/>
</dbReference>
<dbReference type="SUPFAM" id="SSF53681">
    <property type="entry name" value="Aspartate/glutamate racemase"/>
    <property type="match status" value="2"/>
</dbReference>
<dbReference type="PROSITE" id="PS00923">
    <property type="entry name" value="ASP_GLU_RACEMASE_1"/>
    <property type="match status" value="1"/>
</dbReference>
<dbReference type="PROSITE" id="PS00924">
    <property type="entry name" value="ASP_GLU_RACEMASE_2"/>
    <property type="match status" value="1"/>
</dbReference>
<sequence length="292" mass="32271">MYSSSSIEGNLYGFSEQEPQRAPIGVFDSGVGGLTVLRQIYRQLPNESVIYFGDTARLPYGIRSQAEILTFVRDILDWMQQQHVKMVVMACNTSSALALDIVREEYDFPILGVILPGAKAAVQQGKRIGVISTPATAKSNAYRQAIWEIDPNVEVWQVGCPEFVPLIEQNRIQDPYTTEVARAYLEPLIQQDIDTLVYGCTHYPLLAPVLRSLLPPQVKIIDPAVHVVTACTQELDILGLSNTHPPLPTRFAVSGCPQQFSQSGVNWLGYTPLVEAVDFTGIPVSQLQQDLA</sequence>
<reference key="1">
    <citation type="journal article" date="2014" name="Stand. Genomic Sci.">
        <title>Complete genome sequence of Anabaena variabilis ATCC 29413.</title>
        <authorList>
            <person name="Thiel T."/>
            <person name="Pratte B.S."/>
            <person name="Zhong J."/>
            <person name="Goodwin L."/>
            <person name="Copeland A."/>
            <person name="Lucas S."/>
            <person name="Han C."/>
            <person name="Pitluck S."/>
            <person name="Land M.L."/>
            <person name="Kyrpides N.C."/>
            <person name="Woyke T."/>
        </authorList>
    </citation>
    <scope>NUCLEOTIDE SEQUENCE [LARGE SCALE GENOMIC DNA]</scope>
    <source>
        <strain>ATCC 29413 / PCC 7937</strain>
    </source>
</reference>
<proteinExistence type="inferred from homology"/>
<gene>
    <name evidence="1" type="primary">murI</name>
    <name type="ordered locus">Ava_1467</name>
</gene>
<feature type="chain" id="PRO_1000047541" description="Glutamate racemase">
    <location>
        <begin position="1"/>
        <end position="292"/>
    </location>
</feature>
<feature type="active site" description="Proton donor/acceptor" evidence="1">
    <location>
        <position position="91"/>
    </location>
</feature>
<feature type="active site" description="Proton donor/acceptor" evidence="1">
    <location>
        <position position="200"/>
    </location>
</feature>
<feature type="binding site" evidence="1">
    <location>
        <begin position="28"/>
        <end position="29"/>
    </location>
    <ligand>
        <name>substrate</name>
    </ligand>
</feature>
<feature type="binding site" evidence="1">
    <location>
        <begin position="60"/>
        <end position="61"/>
    </location>
    <ligand>
        <name>substrate</name>
    </ligand>
</feature>
<feature type="binding site" evidence="1">
    <location>
        <begin position="92"/>
        <end position="93"/>
    </location>
    <ligand>
        <name>substrate</name>
    </ligand>
</feature>
<feature type="binding site" evidence="1">
    <location>
        <begin position="201"/>
        <end position="202"/>
    </location>
    <ligand>
        <name>substrate</name>
    </ligand>
</feature>
<accession>Q3MD46</accession>
<evidence type="ECO:0000255" key="1">
    <source>
        <dbReference type="HAMAP-Rule" id="MF_00258"/>
    </source>
</evidence>
<protein>
    <recommendedName>
        <fullName evidence="1">Glutamate racemase</fullName>
        <ecNumber evidence="1">5.1.1.3</ecNumber>
    </recommendedName>
</protein>
<comment type="function">
    <text evidence="1">Provides the (R)-glutamate required for cell wall biosynthesis.</text>
</comment>
<comment type="catalytic activity">
    <reaction evidence="1">
        <text>L-glutamate = D-glutamate</text>
        <dbReference type="Rhea" id="RHEA:12813"/>
        <dbReference type="ChEBI" id="CHEBI:29985"/>
        <dbReference type="ChEBI" id="CHEBI:29986"/>
        <dbReference type="EC" id="5.1.1.3"/>
    </reaction>
</comment>
<comment type="pathway">
    <text evidence="1">Cell wall biogenesis; peptidoglycan biosynthesis.</text>
</comment>
<comment type="similarity">
    <text evidence="1">Belongs to the aspartate/glutamate racemases family.</text>
</comment>
<name>MURI_TRIV2</name>
<keyword id="KW-0133">Cell shape</keyword>
<keyword id="KW-0961">Cell wall biogenesis/degradation</keyword>
<keyword id="KW-0413">Isomerase</keyword>
<keyword id="KW-0573">Peptidoglycan synthesis</keyword>